<feature type="chain" id="PRO_0000307897" description="Insect toxin PlIT">
    <location>
        <begin position="1"/>
        <end position="14" status="greater than"/>
    </location>
</feature>
<feature type="domain" description="LCN-type CS-alpha/beta" evidence="2">
    <location>
        <begin position="1"/>
        <end position="14" status="greater than"/>
    </location>
</feature>
<feature type="non-terminal residue">
    <location>
        <position position="14"/>
    </location>
</feature>
<reference key="1">
    <citation type="journal article" date="2007" name="Toxicon">
        <title>Identification of insect-selective and mammal-selective toxins from Parabuthus leiosoma venom.</title>
        <authorList>
            <person name="Ochola J.B."/>
            <person name="Lwande W."/>
            <person name="Thiong'o T."/>
            <person name="Rogo L."/>
            <person name="Herrmann R."/>
            <person name="Schepers E."/>
            <person name="Bagine R."/>
            <person name="Mungai P."/>
            <person name="Ndiege I.O."/>
        </authorList>
    </citation>
    <scope>PROTEIN SEQUENCE</scope>
    <scope>FUNCTION</scope>
    <scope>MASS SPECTROMETRY</scope>
    <source>
        <tissue>Venom</tissue>
    </source>
</reference>
<proteinExistence type="evidence at protein level"/>
<dbReference type="GO" id="GO:0005576">
    <property type="term" value="C:extracellular region"/>
    <property type="evidence" value="ECO:0007669"/>
    <property type="project" value="UniProtKB-SubCell"/>
</dbReference>
<dbReference type="GO" id="GO:0008200">
    <property type="term" value="F:ion channel inhibitor activity"/>
    <property type="evidence" value="ECO:0007669"/>
    <property type="project" value="InterPro"/>
</dbReference>
<dbReference type="GO" id="GO:0017080">
    <property type="term" value="F:sodium channel regulator activity"/>
    <property type="evidence" value="ECO:0007669"/>
    <property type="project" value="UniProtKB-KW"/>
</dbReference>
<dbReference type="GO" id="GO:0090729">
    <property type="term" value="F:toxin activity"/>
    <property type="evidence" value="ECO:0007669"/>
    <property type="project" value="UniProtKB-KW"/>
</dbReference>
<dbReference type="InterPro" id="IPR044062">
    <property type="entry name" value="LCN-type_CS_alpha_beta_dom"/>
</dbReference>
<dbReference type="PROSITE" id="PS51863">
    <property type="entry name" value="LCN_CSAB"/>
    <property type="match status" value="1"/>
</dbReference>
<evidence type="ECO:0000250" key="1"/>
<evidence type="ECO:0000255" key="2">
    <source>
        <dbReference type="PROSITE-ProRule" id="PRU01210"/>
    </source>
</evidence>
<evidence type="ECO:0000269" key="3">
    <source>
    </source>
</evidence>
<evidence type="ECO:0000305" key="4"/>
<protein>
    <recommendedName>
        <fullName>Insect toxin PlIT</fullName>
    </recommendedName>
</protein>
<accession>P0C5J7</accession>
<keyword id="KW-0903">Direct protein sequencing</keyword>
<keyword id="KW-0872">Ion channel impairing toxin</keyword>
<keyword id="KW-0528">Neurotoxin</keyword>
<keyword id="KW-0964">Secreted</keyword>
<keyword id="KW-0800">Toxin</keyword>
<keyword id="KW-0738">Voltage-gated sodium channel impairing toxin</keyword>
<sequence>KDGYPVDNANCKYE</sequence>
<comment type="function">
    <text evidence="1 3">Binds to sodium channels (Nav) and inhibits the inactivation of the activated channels, thereby blocking neuronal transmission (By similarity). Causes prolonged contractile paralysis in C.partellus larvae. It also has significant toxic effects on B.fusca larvae but not on mice.</text>
</comment>
<comment type="subcellular location">
    <subcellularLocation>
        <location>Secreted</location>
    </subcellularLocation>
</comment>
<comment type="tissue specificity">
    <text>Expressed by the venom gland.</text>
</comment>
<comment type="domain">
    <text evidence="4">Has the structural arrangement of an alpha-helix connected to antiparallel beta-sheets by disulfide bonds (CS-alpha/beta).</text>
</comment>
<comment type="mass spectrometry"/>
<comment type="similarity">
    <text evidence="4">Belongs to the long (4 C-C) scorpion toxin superfamily. Sodium channel inhibitor family.</text>
</comment>
<organism>
    <name type="scientific">Parabuthus liosoma</name>
    <name type="common">African black tail scorpion</name>
    <name type="synonym">Parabuthus leiosoma</name>
    <dbReference type="NCBI Taxonomy" id="470425"/>
    <lineage>
        <taxon>Eukaryota</taxon>
        <taxon>Metazoa</taxon>
        <taxon>Ecdysozoa</taxon>
        <taxon>Arthropoda</taxon>
        <taxon>Chelicerata</taxon>
        <taxon>Arachnida</taxon>
        <taxon>Scorpiones</taxon>
        <taxon>Buthida</taxon>
        <taxon>Buthoidea</taxon>
        <taxon>Buthidae</taxon>
        <taxon>Parabuthus</taxon>
    </lineage>
</organism>
<name>SCXT_PARLS</name>